<comment type="function">
    <text evidence="1">Allows the formation of correctly charged Asn-tRNA(Asn) or Gln-tRNA(Gln) through the transamidation of misacylated Asp-tRNA(Asn) or Glu-tRNA(Gln) in organisms which lack either or both of asparaginyl-tRNA or glutaminyl-tRNA synthetases. The reaction takes place in the presence of glutamine and ATP through an activated phospho-Asp-tRNA(Asn) or phospho-Glu-tRNA(Gln).</text>
</comment>
<comment type="catalytic activity">
    <reaction evidence="1">
        <text>L-glutamyl-tRNA(Gln) + L-glutamine + ATP + H2O = L-glutaminyl-tRNA(Gln) + L-glutamate + ADP + phosphate + H(+)</text>
        <dbReference type="Rhea" id="RHEA:17521"/>
        <dbReference type="Rhea" id="RHEA-COMP:9681"/>
        <dbReference type="Rhea" id="RHEA-COMP:9684"/>
        <dbReference type="ChEBI" id="CHEBI:15377"/>
        <dbReference type="ChEBI" id="CHEBI:15378"/>
        <dbReference type="ChEBI" id="CHEBI:29985"/>
        <dbReference type="ChEBI" id="CHEBI:30616"/>
        <dbReference type="ChEBI" id="CHEBI:43474"/>
        <dbReference type="ChEBI" id="CHEBI:58359"/>
        <dbReference type="ChEBI" id="CHEBI:78520"/>
        <dbReference type="ChEBI" id="CHEBI:78521"/>
        <dbReference type="ChEBI" id="CHEBI:456216"/>
    </reaction>
</comment>
<comment type="catalytic activity">
    <reaction evidence="1">
        <text>L-aspartyl-tRNA(Asn) + L-glutamine + ATP + H2O = L-asparaginyl-tRNA(Asn) + L-glutamate + ADP + phosphate + 2 H(+)</text>
        <dbReference type="Rhea" id="RHEA:14513"/>
        <dbReference type="Rhea" id="RHEA-COMP:9674"/>
        <dbReference type="Rhea" id="RHEA-COMP:9677"/>
        <dbReference type="ChEBI" id="CHEBI:15377"/>
        <dbReference type="ChEBI" id="CHEBI:15378"/>
        <dbReference type="ChEBI" id="CHEBI:29985"/>
        <dbReference type="ChEBI" id="CHEBI:30616"/>
        <dbReference type="ChEBI" id="CHEBI:43474"/>
        <dbReference type="ChEBI" id="CHEBI:58359"/>
        <dbReference type="ChEBI" id="CHEBI:78515"/>
        <dbReference type="ChEBI" id="CHEBI:78516"/>
        <dbReference type="ChEBI" id="CHEBI:456216"/>
    </reaction>
</comment>
<comment type="subunit">
    <text evidence="1">Heterotrimer of A, B and C subunits.</text>
</comment>
<comment type="similarity">
    <text evidence="1">Belongs to the GatC family.</text>
</comment>
<gene>
    <name evidence="1" type="primary">gatC</name>
    <name type="ordered locus">Cphamn1_2067</name>
</gene>
<reference key="1">
    <citation type="submission" date="2008-06" db="EMBL/GenBank/DDBJ databases">
        <title>Complete sequence of Chlorobium phaeobacteroides BS1.</title>
        <authorList>
            <consortium name="US DOE Joint Genome Institute"/>
            <person name="Lucas S."/>
            <person name="Copeland A."/>
            <person name="Lapidus A."/>
            <person name="Glavina del Rio T."/>
            <person name="Dalin E."/>
            <person name="Tice H."/>
            <person name="Bruce D."/>
            <person name="Goodwin L."/>
            <person name="Pitluck S."/>
            <person name="Schmutz J."/>
            <person name="Larimer F."/>
            <person name="Land M."/>
            <person name="Hauser L."/>
            <person name="Kyrpides N."/>
            <person name="Ovchinnikova G."/>
            <person name="Li T."/>
            <person name="Liu Z."/>
            <person name="Zhao F."/>
            <person name="Overmann J."/>
            <person name="Bryant D.A."/>
            <person name="Richardson P."/>
        </authorList>
    </citation>
    <scope>NUCLEOTIDE SEQUENCE [LARGE SCALE GENOMIC DNA]</scope>
    <source>
        <strain>BS1</strain>
    </source>
</reference>
<organism>
    <name type="scientific">Chlorobium phaeobacteroides (strain BS1)</name>
    <dbReference type="NCBI Taxonomy" id="331678"/>
    <lineage>
        <taxon>Bacteria</taxon>
        <taxon>Pseudomonadati</taxon>
        <taxon>Chlorobiota</taxon>
        <taxon>Chlorobiia</taxon>
        <taxon>Chlorobiales</taxon>
        <taxon>Chlorobiaceae</taxon>
        <taxon>Chlorobium/Pelodictyon group</taxon>
        <taxon>Chlorobium</taxon>
    </lineage>
</organism>
<accession>B3EMY8</accession>
<evidence type="ECO:0000255" key="1">
    <source>
        <dbReference type="HAMAP-Rule" id="MF_00122"/>
    </source>
</evidence>
<protein>
    <recommendedName>
        <fullName evidence="1">Aspartyl/glutamyl-tRNA(Asn/Gln) amidotransferase subunit C</fullName>
        <shortName evidence="1">Asp/Glu-ADT subunit C</shortName>
        <ecNumber evidence="1">6.3.5.-</ecNumber>
    </recommendedName>
</protein>
<sequence>MSVTIKDVAYIAELARLSFTDTEKEKMTSELNAILQYVEKLDEVDTDGVEPLSSIHDEVNVLRDDVRQESVPNETALLNAPDKLDRFFRVPKVIG</sequence>
<keyword id="KW-0067">ATP-binding</keyword>
<keyword id="KW-0436">Ligase</keyword>
<keyword id="KW-0547">Nucleotide-binding</keyword>
<keyword id="KW-0648">Protein biosynthesis</keyword>
<dbReference type="EC" id="6.3.5.-" evidence="1"/>
<dbReference type="EMBL" id="CP001101">
    <property type="protein sequence ID" value="ACE04977.1"/>
    <property type="molecule type" value="Genomic_DNA"/>
</dbReference>
<dbReference type="SMR" id="B3EMY8"/>
<dbReference type="STRING" id="331678.Cphamn1_2067"/>
<dbReference type="KEGG" id="cpb:Cphamn1_2067"/>
<dbReference type="eggNOG" id="COG0721">
    <property type="taxonomic scope" value="Bacteria"/>
</dbReference>
<dbReference type="HOGENOM" id="CLU_105899_1_2_10"/>
<dbReference type="OrthoDB" id="9813938at2"/>
<dbReference type="GO" id="GO:0050566">
    <property type="term" value="F:asparaginyl-tRNA synthase (glutamine-hydrolyzing) activity"/>
    <property type="evidence" value="ECO:0007669"/>
    <property type="project" value="RHEA"/>
</dbReference>
<dbReference type="GO" id="GO:0005524">
    <property type="term" value="F:ATP binding"/>
    <property type="evidence" value="ECO:0007669"/>
    <property type="project" value="UniProtKB-KW"/>
</dbReference>
<dbReference type="GO" id="GO:0050567">
    <property type="term" value="F:glutaminyl-tRNA synthase (glutamine-hydrolyzing) activity"/>
    <property type="evidence" value="ECO:0007669"/>
    <property type="project" value="UniProtKB-UniRule"/>
</dbReference>
<dbReference type="GO" id="GO:0070681">
    <property type="term" value="P:glutaminyl-tRNAGln biosynthesis via transamidation"/>
    <property type="evidence" value="ECO:0007669"/>
    <property type="project" value="TreeGrafter"/>
</dbReference>
<dbReference type="GO" id="GO:0006450">
    <property type="term" value="P:regulation of translational fidelity"/>
    <property type="evidence" value="ECO:0007669"/>
    <property type="project" value="InterPro"/>
</dbReference>
<dbReference type="GO" id="GO:0006412">
    <property type="term" value="P:translation"/>
    <property type="evidence" value="ECO:0007669"/>
    <property type="project" value="UniProtKB-UniRule"/>
</dbReference>
<dbReference type="Gene3D" id="1.10.20.60">
    <property type="entry name" value="Glu-tRNAGln amidotransferase C subunit, N-terminal domain"/>
    <property type="match status" value="1"/>
</dbReference>
<dbReference type="HAMAP" id="MF_00122">
    <property type="entry name" value="GatC"/>
    <property type="match status" value="1"/>
</dbReference>
<dbReference type="InterPro" id="IPR036113">
    <property type="entry name" value="Asp/Glu-ADT_sf_sub_c"/>
</dbReference>
<dbReference type="InterPro" id="IPR003837">
    <property type="entry name" value="GatC"/>
</dbReference>
<dbReference type="NCBIfam" id="TIGR00135">
    <property type="entry name" value="gatC"/>
    <property type="match status" value="1"/>
</dbReference>
<dbReference type="PANTHER" id="PTHR15004">
    <property type="entry name" value="GLUTAMYL-TRNA(GLN) AMIDOTRANSFERASE SUBUNIT C, MITOCHONDRIAL"/>
    <property type="match status" value="1"/>
</dbReference>
<dbReference type="PANTHER" id="PTHR15004:SF0">
    <property type="entry name" value="GLUTAMYL-TRNA(GLN) AMIDOTRANSFERASE SUBUNIT C, MITOCHONDRIAL"/>
    <property type="match status" value="1"/>
</dbReference>
<dbReference type="Pfam" id="PF02686">
    <property type="entry name" value="GatC"/>
    <property type="match status" value="1"/>
</dbReference>
<dbReference type="SUPFAM" id="SSF141000">
    <property type="entry name" value="Glu-tRNAGln amidotransferase C subunit"/>
    <property type="match status" value="1"/>
</dbReference>
<proteinExistence type="inferred from homology"/>
<name>GATC_CHLPB</name>
<feature type="chain" id="PRO_1000095271" description="Aspartyl/glutamyl-tRNA(Asn/Gln) amidotransferase subunit C">
    <location>
        <begin position="1"/>
        <end position="95"/>
    </location>
</feature>